<organism>
    <name type="scientific">Staphylococcus aureus (strain MSSA476)</name>
    <dbReference type="NCBI Taxonomy" id="282459"/>
    <lineage>
        <taxon>Bacteria</taxon>
        <taxon>Bacillati</taxon>
        <taxon>Bacillota</taxon>
        <taxon>Bacilli</taxon>
        <taxon>Bacillales</taxon>
        <taxon>Staphylococcaceae</taxon>
        <taxon>Staphylococcus</taxon>
    </lineage>
</organism>
<proteinExistence type="inferred from homology"/>
<evidence type="ECO:0000255" key="1">
    <source>
        <dbReference type="HAMAP-Rule" id="MF_00092"/>
    </source>
</evidence>
<gene>
    <name evidence="1" type="primary">mutS2</name>
    <name evidence="1" type="synonym">rqcU</name>
    <name type="ordered locus">SAS1078</name>
</gene>
<dbReference type="EC" id="3.1.-.-" evidence="1"/>
<dbReference type="EC" id="3.6.4.-" evidence="1"/>
<dbReference type="EMBL" id="BX571857">
    <property type="protein sequence ID" value="CAG42853.1"/>
    <property type="molecule type" value="Genomic_DNA"/>
</dbReference>
<dbReference type="RefSeq" id="WP_001249273.1">
    <property type="nucleotide sequence ID" value="NC_002953.3"/>
</dbReference>
<dbReference type="SMR" id="Q6GA70"/>
<dbReference type="KEGG" id="sas:SAS1078"/>
<dbReference type="HOGENOM" id="CLU_011252_2_1_9"/>
<dbReference type="GO" id="GO:0005524">
    <property type="term" value="F:ATP binding"/>
    <property type="evidence" value="ECO:0007669"/>
    <property type="project" value="UniProtKB-UniRule"/>
</dbReference>
<dbReference type="GO" id="GO:0016887">
    <property type="term" value="F:ATP hydrolysis activity"/>
    <property type="evidence" value="ECO:0007669"/>
    <property type="project" value="InterPro"/>
</dbReference>
<dbReference type="GO" id="GO:0140664">
    <property type="term" value="F:ATP-dependent DNA damage sensor activity"/>
    <property type="evidence" value="ECO:0007669"/>
    <property type="project" value="InterPro"/>
</dbReference>
<dbReference type="GO" id="GO:0004519">
    <property type="term" value="F:endonuclease activity"/>
    <property type="evidence" value="ECO:0007669"/>
    <property type="project" value="UniProtKB-UniRule"/>
</dbReference>
<dbReference type="GO" id="GO:0030983">
    <property type="term" value="F:mismatched DNA binding"/>
    <property type="evidence" value="ECO:0007669"/>
    <property type="project" value="InterPro"/>
</dbReference>
<dbReference type="GO" id="GO:0043023">
    <property type="term" value="F:ribosomal large subunit binding"/>
    <property type="evidence" value="ECO:0007669"/>
    <property type="project" value="UniProtKB-UniRule"/>
</dbReference>
<dbReference type="GO" id="GO:0019843">
    <property type="term" value="F:rRNA binding"/>
    <property type="evidence" value="ECO:0007669"/>
    <property type="project" value="UniProtKB-UniRule"/>
</dbReference>
<dbReference type="GO" id="GO:0006298">
    <property type="term" value="P:mismatch repair"/>
    <property type="evidence" value="ECO:0007669"/>
    <property type="project" value="InterPro"/>
</dbReference>
<dbReference type="GO" id="GO:0045910">
    <property type="term" value="P:negative regulation of DNA recombination"/>
    <property type="evidence" value="ECO:0007669"/>
    <property type="project" value="InterPro"/>
</dbReference>
<dbReference type="GO" id="GO:0072344">
    <property type="term" value="P:rescue of stalled ribosome"/>
    <property type="evidence" value="ECO:0007669"/>
    <property type="project" value="UniProtKB-UniRule"/>
</dbReference>
<dbReference type="CDD" id="cd03280">
    <property type="entry name" value="ABC_MutS2"/>
    <property type="match status" value="1"/>
</dbReference>
<dbReference type="FunFam" id="3.30.1370.110:FF:000006">
    <property type="entry name" value="Endonuclease MutS2"/>
    <property type="match status" value="1"/>
</dbReference>
<dbReference type="FunFam" id="3.40.50.300:FF:000830">
    <property type="entry name" value="Endonuclease MutS2"/>
    <property type="match status" value="1"/>
</dbReference>
<dbReference type="Gene3D" id="3.30.1370.110">
    <property type="match status" value="1"/>
</dbReference>
<dbReference type="Gene3D" id="3.40.50.300">
    <property type="entry name" value="P-loop containing nucleotide triphosphate hydrolases"/>
    <property type="match status" value="1"/>
</dbReference>
<dbReference type="HAMAP" id="MF_00092">
    <property type="entry name" value="MutS2"/>
    <property type="match status" value="1"/>
</dbReference>
<dbReference type="InterPro" id="IPR000432">
    <property type="entry name" value="DNA_mismatch_repair_MutS_C"/>
</dbReference>
<dbReference type="InterPro" id="IPR007696">
    <property type="entry name" value="DNA_mismatch_repair_MutS_core"/>
</dbReference>
<dbReference type="InterPro" id="IPR036187">
    <property type="entry name" value="DNA_mismatch_repair_MutS_sf"/>
</dbReference>
<dbReference type="InterPro" id="IPR046893">
    <property type="entry name" value="MSSS"/>
</dbReference>
<dbReference type="InterPro" id="IPR045076">
    <property type="entry name" value="MutS"/>
</dbReference>
<dbReference type="InterPro" id="IPR005747">
    <property type="entry name" value="MutS2"/>
</dbReference>
<dbReference type="InterPro" id="IPR027417">
    <property type="entry name" value="P-loop_NTPase"/>
</dbReference>
<dbReference type="InterPro" id="IPR002625">
    <property type="entry name" value="Smr_dom"/>
</dbReference>
<dbReference type="InterPro" id="IPR036063">
    <property type="entry name" value="Smr_dom_sf"/>
</dbReference>
<dbReference type="NCBIfam" id="TIGR01069">
    <property type="entry name" value="mutS2"/>
    <property type="match status" value="1"/>
</dbReference>
<dbReference type="PANTHER" id="PTHR48466:SF2">
    <property type="entry name" value="OS10G0509000 PROTEIN"/>
    <property type="match status" value="1"/>
</dbReference>
<dbReference type="PANTHER" id="PTHR48466">
    <property type="entry name" value="OS10G0509000 PROTEIN-RELATED"/>
    <property type="match status" value="1"/>
</dbReference>
<dbReference type="Pfam" id="PF20297">
    <property type="entry name" value="MSSS"/>
    <property type="match status" value="1"/>
</dbReference>
<dbReference type="Pfam" id="PF00488">
    <property type="entry name" value="MutS_V"/>
    <property type="match status" value="1"/>
</dbReference>
<dbReference type="Pfam" id="PF01713">
    <property type="entry name" value="Smr"/>
    <property type="match status" value="1"/>
</dbReference>
<dbReference type="PIRSF" id="PIRSF005814">
    <property type="entry name" value="MutS_YshD"/>
    <property type="match status" value="1"/>
</dbReference>
<dbReference type="SMART" id="SM00534">
    <property type="entry name" value="MUTSac"/>
    <property type="match status" value="1"/>
</dbReference>
<dbReference type="SMART" id="SM00533">
    <property type="entry name" value="MUTSd"/>
    <property type="match status" value="1"/>
</dbReference>
<dbReference type="SMART" id="SM00463">
    <property type="entry name" value="SMR"/>
    <property type="match status" value="1"/>
</dbReference>
<dbReference type="SUPFAM" id="SSF48334">
    <property type="entry name" value="DNA repair protein MutS, domain III"/>
    <property type="match status" value="1"/>
</dbReference>
<dbReference type="SUPFAM" id="SSF52540">
    <property type="entry name" value="P-loop containing nucleoside triphosphate hydrolases"/>
    <property type="match status" value="1"/>
</dbReference>
<dbReference type="SUPFAM" id="SSF160443">
    <property type="entry name" value="SMR domain-like"/>
    <property type="match status" value="1"/>
</dbReference>
<dbReference type="PROSITE" id="PS00486">
    <property type="entry name" value="DNA_MISMATCH_REPAIR_2"/>
    <property type="match status" value="1"/>
</dbReference>
<dbReference type="PROSITE" id="PS50828">
    <property type="entry name" value="SMR"/>
    <property type="match status" value="1"/>
</dbReference>
<sequence>MRQKTLDVLEFEKIKSLVANETISDLGLEKVNQMMPATNFETVVFQMEETDEIAQIYNKHRLPSLSGLSKVSAFIHRADIGGVLNVSELNLIKRLIQVQNQFKTFYNQLVEEDEGVKYPILDDKMNQLPVLTDLFHQINETCDTYDLYDNASYELQGIRSKISSTNQRIRQNLDRIVKSQANQKKLSDAIVTVRNERNVIPVKAEYRQDFNGIVHDQSASGQTLYIEPSSVVEMNNQISRLRHDEAIEKERILTQLTGYVAADKDALLVAEQVMGQLDFLIAKARYSRSVKGTKPIFKEDRTVYLPKAYHPLLNRETVVANTIEFMEDIETVIITGPNTGGKTVTLKTLGLIIVMAQSGLLIPTLDGSQLSVFKNVYCDIGDEQSIEQSLSTFSSHMTNIVEILKHADKHSLVLFDELGAGTDPSEGAALAMSILDHVRKIGSLVMATTHYPELKAYSYNREGVMNASVEFDVDTLSPTYKLLMGVPGRSNAFDISKKLGLSLNIINKAKTMIGTDEKEINEMIESLERNYKRVETQRLELDRLVKEAEQVHDDLSKQYQQFQNYEKSLIEEAKEKANQKIKAATKEADDIIKDLRQLREQKGADVKEHELIDKKKRLDDHYEAKSIKQNVQKQKYDKIVAGDEVKVLSYGQKGEVLEIVNDEEAIVQMGIIKMKLPIEDLEKKQKEKVKPTKMVTRQNRQTIKTELDLRGYRYEDALIELDQYLDQAVLSNYEQVYIIHGKGTGALQKGVQQHLKKHKSVSDFRGGMPSEGGFGVTVATLK</sequence>
<protein>
    <recommendedName>
        <fullName evidence="1">Endonuclease MutS2</fullName>
        <ecNumber evidence="1">3.1.-.-</ecNumber>
    </recommendedName>
    <alternativeName>
        <fullName evidence="1">Ribosome-associated protein quality control-upstream factor</fullName>
        <shortName evidence="1">RQC-upstream factor</shortName>
        <shortName evidence="1">RqcU</shortName>
        <ecNumber evidence="1">3.6.4.-</ecNumber>
    </alternativeName>
</protein>
<keyword id="KW-0067">ATP-binding</keyword>
<keyword id="KW-0238">DNA-binding</keyword>
<keyword id="KW-0255">Endonuclease</keyword>
<keyword id="KW-0378">Hydrolase</keyword>
<keyword id="KW-0540">Nuclease</keyword>
<keyword id="KW-0547">Nucleotide-binding</keyword>
<keyword id="KW-0694">RNA-binding</keyword>
<keyword id="KW-0699">rRNA-binding</keyword>
<reference key="1">
    <citation type="journal article" date="2004" name="Proc. Natl. Acad. Sci. U.S.A.">
        <title>Complete genomes of two clinical Staphylococcus aureus strains: evidence for the rapid evolution of virulence and drug resistance.</title>
        <authorList>
            <person name="Holden M.T.G."/>
            <person name="Feil E.J."/>
            <person name="Lindsay J.A."/>
            <person name="Peacock S.J."/>
            <person name="Day N.P.J."/>
            <person name="Enright M.C."/>
            <person name="Foster T.J."/>
            <person name="Moore C.E."/>
            <person name="Hurst L."/>
            <person name="Atkin R."/>
            <person name="Barron A."/>
            <person name="Bason N."/>
            <person name="Bentley S.D."/>
            <person name="Chillingworth C."/>
            <person name="Chillingworth T."/>
            <person name="Churcher C."/>
            <person name="Clark L."/>
            <person name="Corton C."/>
            <person name="Cronin A."/>
            <person name="Doggett J."/>
            <person name="Dowd L."/>
            <person name="Feltwell T."/>
            <person name="Hance Z."/>
            <person name="Harris B."/>
            <person name="Hauser H."/>
            <person name="Holroyd S."/>
            <person name="Jagels K."/>
            <person name="James K.D."/>
            <person name="Lennard N."/>
            <person name="Line A."/>
            <person name="Mayes R."/>
            <person name="Moule S."/>
            <person name="Mungall K."/>
            <person name="Ormond D."/>
            <person name="Quail M.A."/>
            <person name="Rabbinowitsch E."/>
            <person name="Rutherford K.M."/>
            <person name="Sanders M."/>
            <person name="Sharp S."/>
            <person name="Simmonds M."/>
            <person name="Stevens K."/>
            <person name="Whitehead S."/>
            <person name="Barrell B.G."/>
            <person name="Spratt B.G."/>
            <person name="Parkhill J."/>
        </authorList>
    </citation>
    <scope>NUCLEOTIDE SEQUENCE [LARGE SCALE GENOMIC DNA]</scope>
    <source>
        <strain>MSSA476</strain>
    </source>
</reference>
<comment type="function">
    <text evidence="1">Endonuclease that is involved in the suppression of homologous recombination and thus may have a key role in the control of bacterial genetic diversity.</text>
</comment>
<comment type="function">
    <text evidence="1">Acts as a ribosome collision sensor, splitting the ribosome into its 2 subunits. Detects stalled/collided 70S ribosomes which it binds and splits by an ATP-hydrolysis driven conformational change. Acts upstream of the ribosome quality control system (RQC), a ribosome-associated complex that mediates the extraction of incompletely synthesized nascent chains from stalled ribosomes and their subsequent degradation. Probably generates substrates for RQC.</text>
</comment>
<comment type="subunit">
    <text evidence="1">Homodimer. Binds to stalled ribosomes, contacting rRNA.</text>
</comment>
<comment type="similarity">
    <text evidence="1">Belongs to the DNA mismatch repair MutS family. MutS2 subfamily.</text>
</comment>
<feature type="chain" id="PRO_0000115231" description="Endonuclease MutS2">
    <location>
        <begin position="1"/>
        <end position="782"/>
    </location>
</feature>
<feature type="domain" description="Smr" evidence="1">
    <location>
        <begin position="707"/>
        <end position="782"/>
    </location>
</feature>
<feature type="binding site" evidence="1">
    <location>
        <begin position="336"/>
        <end position="343"/>
    </location>
    <ligand>
        <name>ATP</name>
        <dbReference type="ChEBI" id="CHEBI:30616"/>
    </ligand>
</feature>
<accession>Q6GA70</accession>
<name>MUTS2_STAAS</name>